<sequence length="222" mass="24095">MRVSKSLILITLSALVISFAEAYDPSPLQDFCVAIDDLKNGVFVNGKFCKDPKQAKAEDFFFSGLNQAGSTNNKVRSNVTTVNVDQIPGLNTMGISLVRIDYAPYGQNPPHTHPRATEILVLIEGTLYVGFVSSNQDNNRLFAKVLYPGDVFVFPIGMIHFQVNIGKTPAVAFAGLSSQNAGVITIADTVFGSTPPINPDILAQAFQLDVNIVEDLEAKFRN</sequence>
<organism>
    <name type="scientific">Arabidopsis thaliana</name>
    <name type="common">Mouse-ear cress</name>
    <dbReference type="NCBI Taxonomy" id="3702"/>
    <lineage>
        <taxon>Eukaryota</taxon>
        <taxon>Viridiplantae</taxon>
        <taxon>Streptophyta</taxon>
        <taxon>Embryophyta</taxon>
        <taxon>Tracheophyta</taxon>
        <taxon>Spermatophyta</taxon>
        <taxon>Magnoliopsida</taxon>
        <taxon>eudicotyledons</taxon>
        <taxon>Gunneridae</taxon>
        <taxon>Pentapetalae</taxon>
        <taxon>rosids</taxon>
        <taxon>malvids</taxon>
        <taxon>Brassicales</taxon>
        <taxon>Brassicaceae</taxon>
        <taxon>Camelineae</taxon>
        <taxon>Arabidopsis</taxon>
    </lineage>
</organism>
<proteinExistence type="evidence at transcript level"/>
<name>GL113_ARATH</name>
<keyword id="KW-0052">Apoplast</keyword>
<keyword id="KW-1015">Disulfide bond</keyword>
<keyword id="KW-0325">Glycoprotein</keyword>
<keyword id="KW-0464">Manganese</keyword>
<keyword id="KW-0479">Metal-binding</keyword>
<keyword id="KW-1185">Reference proteome</keyword>
<keyword id="KW-0964">Secreted</keyword>
<keyword id="KW-0732">Signal</keyword>
<dbReference type="EMBL" id="U75194">
    <property type="protein sequence ID" value="AAB51572.1"/>
    <property type="molecule type" value="mRNA"/>
</dbReference>
<dbReference type="EMBL" id="AB016892">
    <property type="status" value="NOT_ANNOTATED_CDS"/>
    <property type="molecule type" value="Genomic_DNA"/>
</dbReference>
<dbReference type="EMBL" id="CP002688">
    <property type="protein sequence ID" value="AED94394.2"/>
    <property type="molecule type" value="Genomic_DNA"/>
</dbReference>
<dbReference type="RefSeq" id="NP_001318702.1">
    <property type="nucleotide sequence ID" value="NM_001344284.1"/>
</dbReference>
<dbReference type="SMR" id="P92997"/>
<dbReference type="FunCoup" id="P92997">
    <property type="interactions" value="33"/>
</dbReference>
<dbReference type="STRING" id="3702.P92997"/>
<dbReference type="GlyCosmos" id="P92997">
    <property type="glycosylation" value="1 site, No reported glycans"/>
</dbReference>
<dbReference type="GlyGen" id="P92997">
    <property type="glycosylation" value="1 site"/>
</dbReference>
<dbReference type="GeneID" id="833903"/>
<dbReference type="KEGG" id="ath:AT5G39100"/>
<dbReference type="Araport" id="AT5G39100"/>
<dbReference type="TAIR" id="AT5G39100"/>
<dbReference type="InParanoid" id="P92997"/>
<dbReference type="PRO" id="PR:P92997"/>
<dbReference type="Proteomes" id="UP000006548">
    <property type="component" value="Chromosome 5"/>
</dbReference>
<dbReference type="ExpressionAtlas" id="P92997">
    <property type="expression patterns" value="baseline and differential"/>
</dbReference>
<dbReference type="GO" id="GO:0048046">
    <property type="term" value="C:apoplast"/>
    <property type="evidence" value="ECO:0007669"/>
    <property type="project" value="UniProtKB-SubCell"/>
</dbReference>
<dbReference type="GO" id="GO:0030145">
    <property type="term" value="F:manganese ion binding"/>
    <property type="evidence" value="ECO:0007669"/>
    <property type="project" value="InterPro"/>
</dbReference>
<dbReference type="CDD" id="cd02241">
    <property type="entry name" value="cupin_OxOx"/>
    <property type="match status" value="1"/>
</dbReference>
<dbReference type="FunFam" id="2.60.120.10:FF:000005">
    <property type="entry name" value="Germin-like protein subfamily 1 member 8"/>
    <property type="match status" value="1"/>
</dbReference>
<dbReference type="Gene3D" id="2.60.120.10">
    <property type="entry name" value="Jelly Rolls"/>
    <property type="match status" value="1"/>
</dbReference>
<dbReference type="InterPro" id="IPR006045">
    <property type="entry name" value="Cupin_1"/>
</dbReference>
<dbReference type="InterPro" id="IPR001929">
    <property type="entry name" value="Germin"/>
</dbReference>
<dbReference type="InterPro" id="IPR019780">
    <property type="entry name" value="Germin_Mn-BS"/>
</dbReference>
<dbReference type="InterPro" id="IPR014710">
    <property type="entry name" value="RmlC-like_jellyroll"/>
</dbReference>
<dbReference type="InterPro" id="IPR011051">
    <property type="entry name" value="RmlC_Cupin_sf"/>
</dbReference>
<dbReference type="PANTHER" id="PTHR31238">
    <property type="entry name" value="GERMIN-LIKE PROTEIN SUBFAMILY 3 MEMBER 3"/>
    <property type="match status" value="1"/>
</dbReference>
<dbReference type="Pfam" id="PF00190">
    <property type="entry name" value="Cupin_1"/>
    <property type="match status" value="1"/>
</dbReference>
<dbReference type="PRINTS" id="PR00325">
    <property type="entry name" value="GERMIN"/>
</dbReference>
<dbReference type="SMART" id="SM00835">
    <property type="entry name" value="Cupin_1"/>
    <property type="match status" value="1"/>
</dbReference>
<dbReference type="SUPFAM" id="SSF51182">
    <property type="entry name" value="RmlC-like cupins"/>
    <property type="match status" value="1"/>
</dbReference>
<dbReference type="PROSITE" id="PS00725">
    <property type="entry name" value="GERMIN"/>
    <property type="match status" value="1"/>
</dbReference>
<reference key="1">
    <citation type="journal article" date="1998" name="Plant Mol. Biol.">
        <title>Arabidopsis thaliana contains a large family of germin-like proteins: characterization of cDNA and genomic sequences encoding 12 unique family members.</title>
        <authorList>
            <person name="Carter C."/>
            <person name="Graham R.A."/>
            <person name="Thornburg R.W."/>
        </authorList>
    </citation>
    <scope>NUCLEOTIDE SEQUENCE [MRNA]</scope>
    <source>
        <strain>cv. Columbia</strain>
    </source>
</reference>
<reference key="2">
    <citation type="journal article" date="1998" name="DNA Res.">
        <title>Structural analysis of Arabidopsis thaliana chromosome 5. VIII. Sequence features of the regions of 1,081,958 bp covered by seventeen physically assigned P1 and TAC clones.</title>
        <authorList>
            <person name="Asamizu E."/>
            <person name="Sato S."/>
            <person name="Kaneko T."/>
            <person name="Nakamura Y."/>
            <person name="Kotani H."/>
            <person name="Miyajima N."/>
            <person name="Tabata S."/>
        </authorList>
    </citation>
    <scope>NUCLEOTIDE SEQUENCE [LARGE SCALE GENOMIC DNA]</scope>
    <source>
        <strain>cv. Columbia</strain>
    </source>
</reference>
<reference key="3">
    <citation type="journal article" date="2017" name="Plant J.">
        <title>Araport11: a complete reannotation of the Arabidopsis thaliana reference genome.</title>
        <authorList>
            <person name="Cheng C.Y."/>
            <person name="Krishnakumar V."/>
            <person name="Chan A.P."/>
            <person name="Thibaud-Nissen F."/>
            <person name="Schobel S."/>
            <person name="Town C.D."/>
        </authorList>
    </citation>
    <scope>GENOME REANNOTATION</scope>
    <source>
        <strain>cv. Columbia</strain>
    </source>
</reference>
<gene>
    <name type="primary">GLP6</name>
    <name type="ordered locus">At5g39100</name>
    <name type="ORF">MXF12.13</name>
</gene>
<feature type="signal peptide" evidence="2">
    <location>
        <begin position="1"/>
        <end position="18"/>
    </location>
</feature>
<feature type="chain" id="PRO_0000010813" description="Germin-like protein subfamily 1 member 13">
    <location>
        <begin position="19"/>
        <end position="222"/>
    </location>
</feature>
<feature type="domain" description="Cupin type-1" evidence="2">
    <location>
        <begin position="63"/>
        <end position="214"/>
    </location>
</feature>
<feature type="binding site" evidence="1">
    <location>
        <position position="111"/>
    </location>
    <ligand>
        <name>Mn(2+)</name>
        <dbReference type="ChEBI" id="CHEBI:29035"/>
    </ligand>
</feature>
<feature type="binding site" evidence="1">
    <location>
        <position position="113"/>
    </location>
    <ligand>
        <name>Mn(2+)</name>
        <dbReference type="ChEBI" id="CHEBI:29035"/>
    </ligand>
</feature>
<feature type="binding site" evidence="1">
    <location>
        <position position="118"/>
    </location>
    <ligand>
        <name>Mn(2+)</name>
        <dbReference type="ChEBI" id="CHEBI:29035"/>
    </ligand>
</feature>
<feature type="binding site" evidence="1">
    <location>
        <position position="160"/>
    </location>
    <ligand>
        <name>Mn(2+)</name>
        <dbReference type="ChEBI" id="CHEBI:29035"/>
    </ligand>
</feature>
<feature type="glycosylation site" description="N-linked (GlcNAc...) asparagine" evidence="2">
    <location>
        <position position="78"/>
    </location>
</feature>
<feature type="disulfide bond" evidence="1">
    <location>
        <begin position="32"/>
        <end position="49"/>
    </location>
</feature>
<feature type="sequence conflict" description="In Ref. 1; AAB51572." evidence="3" ref="1">
    <original>E</original>
    <variation>K</variation>
    <location>
        <position position="214"/>
    </location>
</feature>
<accession>P92997</accession>
<accession>F4KD10</accession>
<evidence type="ECO:0000250" key="1"/>
<evidence type="ECO:0000255" key="2"/>
<evidence type="ECO:0000305" key="3"/>
<protein>
    <recommendedName>
        <fullName>Germin-like protein subfamily 1 member 13</fullName>
    </recommendedName>
</protein>
<comment type="function">
    <text>May play a role in plant defense. Probably has no oxalate oxidase activity even if the active site is conserved.</text>
</comment>
<comment type="subunit">
    <text evidence="1">Oligomer (believed to be a pentamer but probably hexamer).</text>
</comment>
<comment type="subcellular location">
    <subcellularLocation>
        <location evidence="1">Secreted</location>
        <location evidence="1">Extracellular space</location>
        <location evidence="1">Apoplast</location>
    </subcellularLocation>
</comment>
<comment type="similarity">
    <text evidence="3">Belongs to the germin family.</text>
</comment>